<protein>
    <recommendedName>
        <fullName evidence="1">Small ribosomal subunit protein uS13</fullName>
    </recommendedName>
    <alternativeName>
        <fullName evidence="3">30S ribosomal protein S13</fullName>
    </alternativeName>
</protein>
<accession>Q5P310</accession>
<proteinExistence type="inferred from homology"/>
<name>RS13_AROAE</name>
<evidence type="ECO:0000255" key="1">
    <source>
        <dbReference type="HAMAP-Rule" id="MF_01315"/>
    </source>
</evidence>
<evidence type="ECO:0000256" key="2">
    <source>
        <dbReference type="SAM" id="MobiDB-lite"/>
    </source>
</evidence>
<evidence type="ECO:0000305" key="3"/>
<keyword id="KW-1185">Reference proteome</keyword>
<keyword id="KW-0687">Ribonucleoprotein</keyword>
<keyword id="KW-0689">Ribosomal protein</keyword>
<keyword id="KW-0694">RNA-binding</keyword>
<keyword id="KW-0699">rRNA-binding</keyword>
<keyword id="KW-0820">tRNA-binding</keyword>
<dbReference type="EMBL" id="CR555306">
    <property type="protein sequence ID" value="CAI08304.1"/>
    <property type="molecule type" value="Genomic_DNA"/>
</dbReference>
<dbReference type="RefSeq" id="WP_011237994.1">
    <property type="nucleotide sequence ID" value="NC_006513.1"/>
</dbReference>
<dbReference type="SMR" id="Q5P310"/>
<dbReference type="STRING" id="76114.ebB132"/>
<dbReference type="KEGG" id="eba:ebB132"/>
<dbReference type="eggNOG" id="COG0099">
    <property type="taxonomic scope" value="Bacteria"/>
</dbReference>
<dbReference type="HOGENOM" id="CLU_103849_1_2_4"/>
<dbReference type="OrthoDB" id="9803610at2"/>
<dbReference type="Proteomes" id="UP000006552">
    <property type="component" value="Chromosome"/>
</dbReference>
<dbReference type="GO" id="GO:0005829">
    <property type="term" value="C:cytosol"/>
    <property type="evidence" value="ECO:0007669"/>
    <property type="project" value="TreeGrafter"/>
</dbReference>
<dbReference type="GO" id="GO:0015935">
    <property type="term" value="C:small ribosomal subunit"/>
    <property type="evidence" value="ECO:0007669"/>
    <property type="project" value="TreeGrafter"/>
</dbReference>
<dbReference type="GO" id="GO:0019843">
    <property type="term" value="F:rRNA binding"/>
    <property type="evidence" value="ECO:0007669"/>
    <property type="project" value="UniProtKB-UniRule"/>
</dbReference>
<dbReference type="GO" id="GO:0003735">
    <property type="term" value="F:structural constituent of ribosome"/>
    <property type="evidence" value="ECO:0007669"/>
    <property type="project" value="InterPro"/>
</dbReference>
<dbReference type="GO" id="GO:0000049">
    <property type="term" value="F:tRNA binding"/>
    <property type="evidence" value="ECO:0007669"/>
    <property type="project" value="UniProtKB-UniRule"/>
</dbReference>
<dbReference type="GO" id="GO:0006412">
    <property type="term" value="P:translation"/>
    <property type="evidence" value="ECO:0007669"/>
    <property type="project" value="UniProtKB-UniRule"/>
</dbReference>
<dbReference type="FunFam" id="1.10.8.50:FF:000001">
    <property type="entry name" value="30S ribosomal protein S13"/>
    <property type="match status" value="1"/>
</dbReference>
<dbReference type="FunFam" id="4.10.910.10:FF:000001">
    <property type="entry name" value="30S ribosomal protein S13"/>
    <property type="match status" value="1"/>
</dbReference>
<dbReference type="Gene3D" id="1.10.8.50">
    <property type="match status" value="1"/>
</dbReference>
<dbReference type="Gene3D" id="4.10.910.10">
    <property type="entry name" value="30s ribosomal protein s13, domain 2"/>
    <property type="match status" value="1"/>
</dbReference>
<dbReference type="HAMAP" id="MF_01315">
    <property type="entry name" value="Ribosomal_uS13"/>
    <property type="match status" value="1"/>
</dbReference>
<dbReference type="InterPro" id="IPR027437">
    <property type="entry name" value="Rbsml_uS13_C"/>
</dbReference>
<dbReference type="InterPro" id="IPR001892">
    <property type="entry name" value="Ribosomal_uS13"/>
</dbReference>
<dbReference type="InterPro" id="IPR010979">
    <property type="entry name" value="Ribosomal_uS13-like_H2TH"/>
</dbReference>
<dbReference type="InterPro" id="IPR019980">
    <property type="entry name" value="Ribosomal_uS13_bac-type"/>
</dbReference>
<dbReference type="InterPro" id="IPR018269">
    <property type="entry name" value="Ribosomal_uS13_CS"/>
</dbReference>
<dbReference type="NCBIfam" id="TIGR03631">
    <property type="entry name" value="uS13_bact"/>
    <property type="match status" value="1"/>
</dbReference>
<dbReference type="PANTHER" id="PTHR10871">
    <property type="entry name" value="30S RIBOSOMAL PROTEIN S13/40S RIBOSOMAL PROTEIN S18"/>
    <property type="match status" value="1"/>
</dbReference>
<dbReference type="PANTHER" id="PTHR10871:SF1">
    <property type="entry name" value="SMALL RIBOSOMAL SUBUNIT PROTEIN US13M"/>
    <property type="match status" value="1"/>
</dbReference>
<dbReference type="Pfam" id="PF00416">
    <property type="entry name" value="Ribosomal_S13"/>
    <property type="match status" value="1"/>
</dbReference>
<dbReference type="PIRSF" id="PIRSF002134">
    <property type="entry name" value="Ribosomal_S13"/>
    <property type="match status" value="1"/>
</dbReference>
<dbReference type="SUPFAM" id="SSF46946">
    <property type="entry name" value="S13-like H2TH domain"/>
    <property type="match status" value="1"/>
</dbReference>
<dbReference type="PROSITE" id="PS00646">
    <property type="entry name" value="RIBOSOMAL_S13_1"/>
    <property type="match status" value="1"/>
</dbReference>
<dbReference type="PROSITE" id="PS50159">
    <property type="entry name" value="RIBOSOMAL_S13_2"/>
    <property type="match status" value="1"/>
</dbReference>
<gene>
    <name evidence="1" type="primary">rpsM</name>
    <name type="ordered locus">AZOSEA21790</name>
    <name type="ORF">ebB132</name>
</gene>
<reference key="1">
    <citation type="journal article" date="2005" name="Arch. Microbiol.">
        <title>The genome sequence of an anaerobic aromatic-degrading denitrifying bacterium, strain EbN1.</title>
        <authorList>
            <person name="Rabus R."/>
            <person name="Kube M."/>
            <person name="Heider J."/>
            <person name="Beck A."/>
            <person name="Heitmann K."/>
            <person name="Widdel F."/>
            <person name="Reinhardt R."/>
        </authorList>
    </citation>
    <scope>NUCLEOTIDE SEQUENCE [LARGE SCALE GENOMIC DNA]</scope>
    <source>
        <strain>DSM 19018 / LMG 30748 / EbN1</strain>
    </source>
</reference>
<comment type="function">
    <text evidence="1">Located at the top of the head of the 30S subunit, it contacts several helices of the 16S rRNA. In the 70S ribosome it contacts the 23S rRNA (bridge B1a) and protein L5 of the 50S subunit (bridge B1b), connecting the 2 subunits; these bridges are implicated in subunit movement. Contacts the tRNAs in the A and P-sites.</text>
</comment>
<comment type="subunit">
    <text evidence="1">Part of the 30S ribosomal subunit. Forms a loose heterodimer with protein S19. Forms two bridges to the 50S subunit in the 70S ribosome.</text>
</comment>
<comment type="similarity">
    <text evidence="1">Belongs to the universal ribosomal protein uS13 family.</text>
</comment>
<feature type="chain" id="PRO_0000230465" description="Small ribosomal subunit protein uS13">
    <location>
        <begin position="1"/>
        <end position="120"/>
    </location>
</feature>
<feature type="region of interest" description="Disordered" evidence="2">
    <location>
        <begin position="94"/>
        <end position="120"/>
    </location>
</feature>
<organism>
    <name type="scientific">Aromatoleum aromaticum (strain DSM 19018 / LMG 30748 / EbN1)</name>
    <name type="common">Azoarcus sp. (strain EbN1)</name>
    <dbReference type="NCBI Taxonomy" id="76114"/>
    <lineage>
        <taxon>Bacteria</taxon>
        <taxon>Pseudomonadati</taxon>
        <taxon>Pseudomonadota</taxon>
        <taxon>Betaproteobacteria</taxon>
        <taxon>Rhodocyclales</taxon>
        <taxon>Rhodocyclaceae</taxon>
        <taxon>Aromatoleum</taxon>
    </lineage>
</organism>
<sequence length="120" mass="13608">MARIAGVNIPNHKHAEIALTAIYGIGRSRAQKICDAANVVRSVKMKDLTESDMERLRDEVAKFIVEGDLRRETTMNIKRLMDLGCYRGVRHRRGLPLRGQRTRTNARTRKGPRKAIAGKK</sequence>